<keyword id="KW-1185">Reference proteome</keyword>
<keyword id="KW-0687">Ribonucleoprotein</keyword>
<keyword id="KW-0689">Ribosomal protein</keyword>
<keyword id="KW-0694">RNA-binding</keyword>
<keyword id="KW-0699">rRNA-binding</keyword>
<comment type="function">
    <text evidence="1">One of the primary rRNA binding proteins. Required for association of the 30S and 50S subunits to form the 70S ribosome, for tRNA binding and peptide bond formation. It has been suggested to have peptidyltransferase activity; this is somewhat controversial. Makes several contacts with the 16S rRNA in the 70S ribosome.</text>
</comment>
<comment type="subunit">
    <text evidence="1">Part of the 50S ribosomal subunit. Forms a bridge to the 30S subunit in the 70S ribosome.</text>
</comment>
<comment type="similarity">
    <text evidence="1">Belongs to the universal ribosomal protein uL2 family.</text>
</comment>
<name>RL2_GLAP5</name>
<accession>B8F758</accession>
<evidence type="ECO:0000255" key="1">
    <source>
        <dbReference type="HAMAP-Rule" id="MF_01320"/>
    </source>
</evidence>
<evidence type="ECO:0000256" key="2">
    <source>
        <dbReference type="SAM" id="MobiDB-lite"/>
    </source>
</evidence>
<evidence type="ECO:0000305" key="3"/>
<dbReference type="EMBL" id="CP001321">
    <property type="protein sequence ID" value="ACL33160.1"/>
    <property type="molecule type" value="Genomic_DNA"/>
</dbReference>
<dbReference type="RefSeq" id="WP_015939852.1">
    <property type="nucleotide sequence ID" value="NC_011852.1"/>
</dbReference>
<dbReference type="SMR" id="B8F758"/>
<dbReference type="STRING" id="557723.HAPS_1609"/>
<dbReference type="KEGG" id="hap:HAPS_1609"/>
<dbReference type="PATRIC" id="fig|557723.8.peg.1578"/>
<dbReference type="HOGENOM" id="CLU_036235_2_1_6"/>
<dbReference type="Proteomes" id="UP000006743">
    <property type="component" value="Chromosome"/>
</dbReference>
<dbReference type="GO" id="GO:0015934">
    <property type="term" value="C:large ribosomal subunit"/>
    <property type="evidence" value="ECO:0007669"/>
    <property type="project" value="InterPro"/>
</dbReference>
<dbReference type="GO" id="GO:0019843">
    <property type="term" value="F:rRNA binding"/>
    <property type="evidence" value="ECO:0007669"/>
    <property type="project" value="UniProtKB-UniRule"/>
</dbReference>
<dbReference type="GO" id="GO:0003735">
    <property type="term" value="F:structural constituent of ribosome"/>
    <property type="evidence" value="ECO:0007669"/>
    <property type="project" value="InterPro"/>
</dbReference>
<dbReference type="GO" id="GO:0016740">
    <property type="term" value="F:transferase activity"/>
    <property type="evidence" value="ECO:0007669"/>
    <property type="project" value="InterPro"/>
</dbReference>
<dbReference type="GO" id="GO:0002181">
    <property type="term" value="P:cytoplasmic translation"/>
    <property type="evidence" value="ECO:0007669"/>
    <property type="project" value="TreeGrafter"/>
</dbReference>
<dbReference type="FunFam" id="2.30.30.30:FF:000001">
    <property type="entry name" value="50S ribosomal protein L2"/>
    <property type="match status" value="1"/>
</dbReference>
<dbReference type="FunFam" id="2.40.50.140:FF:000003">
    <property type="entry name" value="50S ribosomal protein L2"/>
    <property type="match status" value="1"/>
</dbReference>
<dbReference type="FunFam" id="4.10.950.10:FF:000001">
    <property type="entry name" value="50S ribosomal protein L2"/>
    <property type="match status" value="1"/>
</dbReference>
<dbReference type="Gene3D" id="2.30.30.30">
    <property type="match status" value="1"/>
</dbReference>
<dbReference type="Gene3D" id="2.40.50.140">
    <property type="entry name" value="Nucleic acid-binding proteins"/>
    <property type="match status" value="1"/>
</dbReference>
<dbReference type="Gene3D" id="4.10.950.10">
    <property type="entry name" value="Ribosomal protein L2, domain 3"/>
    <property type="match status" value="1"/>
</dbReference>
<dbReference type="HAMAP" id="MF_01320_B">
    <property type="entry name" value="Ribosomal_uL2_B"/>
    <property type="match status" value="1"/>
</dbReference>
<dbReference type="InterPro" id="IPR012340">
    <property type="entry name" value="NA-bd_OB-fold"/>
</dbReference>
<dbReference type="InterPro" id="IPR014722">
    <property type="entry name" value="Rib_uL2_dom2"/>
</dbReference>
<dbReference type="InterPro" id="IPR002171">
    <property type="entry name" value="Ribosomal_uL2"/>
</dbReference>
<dbReference type="InterPro" id="IPR005880">
    <property type="entry name" value="Ribosomal_uL2_bac/org-type"/>
</dbReference>
<dbReference type="InterPro" id="IPR022669">
    <property type="entry name" value="Ribosomal_uL2_C"/>
</dbReference>
<dbReference type="InterPro" id="IPR022671">
    <property type="entry name" value="Ribosomal_uL2_CS"/>
</dbReference>
<dbReference type="InterPro" id="IPR014726">
    <property type="entry name" value="Ribosomal_uL2_dom3"/>
</dbReference>
<dbReference type="InterPro" id="IPR022666">
    <property type="entry name" value="Ribosomal_uL2_RNA-bd_dom"/>
</dbReference>
<dbReference type="InterPro" id="IPR008991">
    <property type="entry name" value="Translation_prot_SH3-like_sf"/>
</dbReference>
<dbReference type="NCBIfam" id="TIGR01171">
    <property type="entry name" value="rplB_bact"/>
    <property type="match status" value="1"/>
</dbReference>
<dbReference type="PANTHER" id="PTHR13691:SF5">
    <property type="entry name" value="LARGE RIBOSOMAL SUBUNIT PROTEIN UL2M"/>
    <property type="match status" value="1"/>
</dbReference>
<dbReference type="PANTHER" id="PTHR13691">
    <property type="entry name" value="RIBOSOMAL PROTEIN L2"/>
    <property type="match status" value="1"/>
</dbReference>
<dbReference type="Pfam" id="PF00181">
    <property type="entry name" value="Ribosomal_L2"/>
    <property type="match status" value="1"/>
</dbReference>
<dbReference type="Pfam" id="PF03947">
    <property type="entry name" value="Ribosomal_L2_C"/>
    <property type="match status" value="1"/>
</dbReference>
<dbReference type="PIRSF" id="PIRSF002158">
    <property type="entry name" value="Ribosomal_L2"/>
    <property type="match status" value="1"/>
</dbReference>
<dbReference type="SMART" id="SM01383">
    <property type="entry name" value="Ribosomal_L2"/>
    <property type="match status" value="1"/>
</dbReference>
<dbReference type="SMART" id="SM01382">
    <property type="entry name" value="Ribosomal_L2_C"/>
    <property type="match status" value="1"/>
</dbReference>
<dbReference type="SUPFAM" id="SSF50249">
    <property type="entry name" value="Nucleic acid-binding proteins"/>
    <property type="match status" value="1"/>
</dbReference>
<dbReference type="SUPFAM" id="SSF50104">
    <property type="entry name" value="Translation proteins SH3-like domain"/>
    <property type="match status" value="1"/>
</dbReference>
<dbReference type="PROSITE" id="PS00467">
    <property type="entry name" value="RIBOSOMAL_L2"/>
    <property type="match status" value="1"/>
</dbReference>
<proteinExistence type="inferred from homology"/>
<sequence length="273" mass="29880">MAIVKCKPTSAGRRHVVKVVNTELHKGKPFAALLDTKSKTGGRNNLGRITTRHIGGGHKQHYRLIDFKRNKLDIPAVVERLEYDPNRSANIALVLYKDGERRYILAPKGLVAGDTIQAGASAPIKVGNSLPMRNIPVGSTVHNVELKPGKGGQIARSAGAYVQIIAREGNYVTLRLRSGEMRKVLAECSATIGEVGNSEHMLRVLGKAGANRWRGIRPTVRGTAMNPVDHPHGGGEGRNFGKHPVTPWGVQTKGKKTRHNKRTDKFIVRRRGK</sequence>
<gene>
    <name evidence="1" type="primary">rplB</name>
    <name type="ordered locus">HAPS_1609</name>
</gene>
<organism>
    <name type="scientific">Glaesserella parasuis serovar 5 (strain SH0165)</name>
    <name type="common">Haemophilus parasuis</name>
    <dbReference type="NCBI Taxonomy" id="557723"/>
    <lineage>
        <taxon>Bacteria</taxon>
        <taxon>Pseudomonadati</taxon>
        <taxon>Pseudomonadota</taxon>
        <taxon>Gammaproteobacteria</taxon>
        <taxon>Pasteurellales</taxon>
        <taxon>Pasteurellaceae</taxon>
        <taxon>Glaesserella</taxon>
    </lineage>
</organism>
<protein>
    <recommendedName>
        <fullName evidence="1">Large ribosomal subunit protein uL2</fullName>
    </recommendedName>
    <alternativeName>
        <fullName evidence="3">50S ribosomal protein L2</fullName>
    </alternativeName>
</protein>
<reference key="1">
    <citation type="journal article" date="2009" name="J. Bacteriol.">
        <title>Complete genome sequence of Haemophilus parasuis SH0165.</title>
        <authorList>
            <person name="Yue M."/>
            <person name="Yang F."/>
            <person name="Yang J."/>
            <person name="Bei W."/>
            <person name="Cai X."/>
            <person name="Chen L."/>
            <person name="Dong J."/>
            <person name="Zhou R."/>
            <person name="Jin M."/>
            <person name="Jin Q."/>
            <person name="Chen H."/>
        </authorList>
    </citation>
    <scope>NUCLEOTIDE SEQUENCE [LARGE SCALE GENOMIC DNA]</scope>
    <source>
        <strain>SH0165</strain>
    </source>
</reference>
<feature type="chain" id="PRO_1000165751" description="Large ribosomal subunit protein uL2">
    <location>
        <begin position="1"/>
        <end position="273"/>
    </location>
</feature>
<feature type="region of interest" description="Disordered" evidence="2">
    <location>
        <begin position="221"/>
        <end position="273"/>
    </location>
</feature>
<feature type="compositionally biased region" description="Basic residues" evidence="2">
    <location>
        <begin position="253"/>
        <end position="273"/>
    </location>
</feature>